<dbReference type="EC" id="5.3.1.1" evidence="1"/>
<dbReference type="EMBL" id="CP000853">
    <property type="protein sequence ID" value="ABW18518.1"/>
    <property type="molecule type" value="Genomic_DNA"/>
</dbReference>
<dbReference type="RefSeq" id="WP_012158830.1">
    <property type="nucleotide sequence ID" value="NC_009922.1"/>
</dbReference>
<dbReference type="SMR" id="A8MFY0"/>
<dbReference type="STRING" id="350688.Clos_0971"/>
<dbReference type="KEGG" id="aoe:Clos_0971"/>
<dbReference type="eggNOG" id="COG0149">
    <property type="taxonomic scope" value="Bacteria"/>
</dbReference>
<dbReference type="HOGENOM" id="CLU_024251_2_3_9"/>
<dbReference type="OrthoDB" id="9809429at2"/>
<dbReference type="UniPathway" id="UPA00109">
    <property type="reaction ID" value="UER00189"/>
</dbReference>
<dbReference type="UniPathway" id="UPA00138"/>
<dbReference type="Proteomes" id="UP000000269">
    <property type="component" value="Chromosome"/>
</dbReference>
<dbReference type="GO" id="GO:0005829">
    <property type="term" value="C:cytosol"/>
    <property type="evidence" value="ECO:0007669"/>
    <property type="project" value="TreeGrafter"/>
</dbReference>
<dbReference type="GO" id="GO:0004807">
    <property type="term" value="F:triose-phosphate isomerase activity"/>
    <property type="evidence" value="ECO:0007669"/>
    <property type="project" value="UniProtKB-UniRule"/>
</dbReference>
<dbReference type="GO" id="GO:0006094">
    <property type="term" value="P:gluconeogenesis"/>
    <property type="evidence" value="ECO:0007669"/>
    <property type="project" value="UniProtKB-UniRule"/>
</dbReference>
<dbReference type="GO" id="GO:0046166">
    <property type="term" value="P:glyceraldehyde-3-phosphate biosynthetic process"/>
    <property type="evidence" value="ECO:0007669"/>
    <property type="project" value="TreeGrafter"/>
</dbReference>
<dbReference type="GO" id="GO:0019563">
    <property type="term" value="P:glycerol catabolic process"/>
    <property type="evidence" value="ECO:0007669"/>
    <property type="project" value="TreeGrafter"/>
</dbReference>
<dbReference type="GO" id="GO:0006096">
    <property type="term" value="P:glycolytic process"/>
    <property type="evidence" value="ECO:0007669"/>
    <property type="project" value="UniProtKB-UniRule"/>
</dbReference>
<dbReference type="CDD" id="cd00311">
    <property type="entry name" value="TIM"/>
    <property type="match status" value="1"/>
</dbReference>
<dbReference type="FunFam" id="3.20.20.70:FF:000016">
    <property type="entry name" value="Triosephosphate isomerase"/>
    <property type="match status" value="1"/>
</dbReference>
<dbReference type="Gene3D" id="3.20.20.70">
    <property type="entry name" value="Aldolase class I"/>
    <property type="match status" value="1"/>
</dbReference>
<dbReference type="HAMAP" id="MF_00147_B">
    <property type="entry name" value="TIM_B"/>
    <property type="match status" value="1"/>
</dbReference>
<dbReference type="InterPro" id="IPR013785">
    <property type="entry name" value="Aldolase_TIM"/>
</dbReference>
<dbReference type="InterPro" id="IPR035990">
    <property type="entry name" value="TIM_sf"/>
</dbReference>
<dbReference type="InterPro" id="IPR022896">
    <property type="entry name" value="TrioseP_Isoase_bac/euk"/>
</dbReference>
<dbReference type="InterPro" id="IPR000652">
    <property type="entry name" value="Triosephosphate_isomerase"/>
</dbReference>
<dbReference type="InterPro" id="IPR020861">
    <property type="entry name" value="Triosephosphate_isomerase_AS"/>
</dbReference>
<dbReference type="NCBIfam" id="TIGR00419">
    <property type="entry name" value="tim"/>
    <property type="match status" value="1"/>
</dbReference>
<dbReference type="PANTHER" id="PTHR21139">
    <property type="entry name" value="TRIOSEPHOSPHATE ISOMERASE"/>
    <property type="match status" value="1"/>
</dbReference>
<dbReference type="PANTHER" id="PTHR21139:SF42">
    <property type="entry name" value="TRIOSEPHOSPHATE ISOMERASE"/>
    <property type="match status" value="1"/>
</dbReference>
<dbReference type="Pfam" id="PF00121">
    <property type="entry name" value="TIM"/>
    <property type="match status" value="1"/>
</dbReference>
<dbReference type="SUPFAM" id="SSF51351">
    <property type="entry name" value="Triosephosphate isomerase (TIM)"/>
    <property type="match status" value="1"/>
</dbReference>
<dbReference type="PROSITE" id="PS00171">
    <property type="entry name" value="TIM_1"/>
    <property type="match status" value="1"/>
</dbReference>
<dbReference type="PROSITE" id="PS51440">
    <property type="entry name" value="TIM_2"/>
    <property type="match status" value="1"/>
</dbReference>
<keyword id="KW-0963">Cytoplasm</keyword>
<keyword id="KW-0312">Gluconeogenesis</keyword>
<keyword id="KW-0324">Glycolysis</keyword>
<keyword id="KW-0413">Isomerase</keyword>
<keyword id="KW-1185">Reference proteome</keyword>
<sequence length="248" mass="27384">MRKPIIAGNWKMNKVSKEALDLVNQIKDEVHKTEVEVVVCCPFTVLSQVQKALVGTNLKLGAQNMHWEEDGAYTGEISANMLKDIGVEYVILGHSERRQYFNETDETVNKKVKKAIKENLKPIVCIGESLEEREANQTFDVIKKQLLGAFEGVPAEAMDNVVLAYEPIWAIGTGKTASSEEAQTVIAYIRSLIEEKYGVDISEEVRIQYGGSVKASNATEIMNETDIDGALVGGASLKAEEFLGIINF</sequence>
<accession>A8MFY0</accession>
<proteinExistence type="inferred from homology"/>
<reference key="1">
    <citation type="submission" date="2007-10" db="EMBL/GenBank/DDBJ databases">
        <title>Complete genome of Alkaliphilus oremlandii OhILAs.</title>
        <authorList>
            <person name="Copeland A."/>
            <person name="Lucas S."/>
            <person name="Lapidus A."/>
            <person name="Barry K."/>
            <person name="Detter J.C."/>
            <person name="Glavina del Rio T."/>
            <person name="Hammon N."/>
            <person name="Israni S."/>
            <person name="Dalin E."/>
            <person name="Tice H."/>
            <person name="Pitluck S."/>
            <person name="Chain P."/>
            <person name="Malfatti S."/>
            <person name="Shin M."/>
            <person name="Vergez L."/>
            <person name="Schmutz J."/>
            <person name="Larimer F."/>
            <person name="Land M."/>
            <person name="Hauser L."/>
            <person name="Kyrpides N."/>
            <person name="Mikhailova N."/>
            <person name="Stolz J.F."/>
            <person name="Dawson A."/>
            <person name="Fisher E."/>
            <person name="Crable B."/>
            <person name="Perera E."/>
            <person name="Lisak J."/>
            <person name="Ranganathan M."/>
            <person name="Basu P."/>
            <person name="Richardson P."/>
        </authorList>
    </citation>
    <scope>NUCLEOTIDE SEQUENCE [LARGE SCALE GENOMIC DNA]</scope>
    <source>
        <strain>OhILAs</strain>
    </source>
</reference>
<gene>
    <name evidence="1" type="primary">tpiA</name>
    <name type="ordered locus">Clos_0971</name>
</gene>
<feature type="chain" id="PRO_1000058107" description="Triosephosphate isomerase">
    <location>
        <begin position="1"/>
        <end position="248"/>
    </location>
</feature>
<feature type="active site" description="Electrophile" evidence="1">
    <location>
        <position position="94"/>
    </location>
</feature>
<feature type="active site" description="Proton acceptor" evidence="1">
    <location>
        <position position="166"/>
    </location>
</feature>
<feature type="binding site" evidence="1">
    <location>
        <begin position="9"/>
        <end position="11"/>
    </location>
    <ligand>
        <name>substrate</name>
    </ligand>
</feature>
<feature type="binding site" evidence="1">
    <location>
        <position position="172"/>
    </location>
    <ligand>
        <name>substrate</name>
    </ligand>
</feature>
<feature type="binding site" evidence="1">
    <location>
        <position position="212"/>
    </location>
    <ligand>
        <name>substrate</name>
    </ligand>
</feature>
<feature type="binding site" evidence="1">
    <location>
        <begin position="233"/>
        <end position="234"/>
    </location>
    <ligand>
        <name>substrate</name>
    </ligand>
</feature>
<comment type="function">
    <text evidence="1">Involved in the gluconeogenesis. Catalyzes stereospecifically the conversion of dihydroxyacetone phosphate (DHAP) to D-glyceraldehyde-3-phosphate (G3P).</text>
</comment>
<comment type="catalytic activity">
    <reaction evidence="1">
        <text>D-glyceraldehyde 3-phosphate = dihydroxyacetone phosphate</text>
        <dbReference type="Rhea" id="RHEA:18585"/>
        <dbReference type="ChEBI" id="CHEBI:57642"/>
        <dbReference type="ChEBI" id="CHEBI:59776"/>
        <dbReference type="EC" id="5.3.1.1"/>
    </reaction>
</comment>
<comment type="pathway">
    <text evidence="1">Carbohydrate biosynthesis; gluconeogenesis.</text>
</comment>
<comment type="pathway">
    <text evidence="1">Carbohydrate degradation; glycolysis; D-glyceraldehyde 3-phosphate from glycerone phosphate: step 1/1.</text>
</comment>
<comment type="subunit">
    <text evidence="1">Homodimer.</text>
</comment>
<comment type="subcellular location">
    <subcellularLocation>
        <location evidence="1">Cytoplasm</location>
    </subcellularLocation>
</comment>
<comment type="similarity">
    <text evidence="1">Belongs to the triosephosphate isomerase family.</text>
</comment>
<name>TPIS_ALKOO</name>
<organism>
    <name type="scientific">Alkaliphilus oremlandii (strain OhILAs)</name>
    <name type="common">Clostridium oremlandii (strain OhILAs)</name>
    <dbReference type="NCBI Taxonomy" id="350688"/>
    <lineage>
        <taxon>Bacteria</taxon>
        <taxon>Bacillati</taxon>
        <taxon>Bacillota</taxon>
        <taxon>Clostridia</taxon>
        <taxon>Peptostreptococcales</taxon>
        <taxon>Natronincolaceae</taxon>
        <taxon>Alkaliphilus</taxon>
    </lineage>
</organism>
<protein>
    <recommendedName>
        <fullName evidence="1">Triosephosphate isomerase</fullName>
        <shortName evidence="1">TIM</shortName>
        <shortName evidence="1">TPI</shortName>
        <ecNumber evidence="1">5.3.1.1</ecNumber>
    </recommendedName>
    <alternativeName>
        <fullName evidence="1">Triose-phosphate isomerase</fullName>
    </alternativeName>
</protein>
<evidence type="ECO:0000255" key="1">
    <source>
        <dbReference type="HAMAP-Rule" id="MF_00147"/>
    </source>
</evidence>